<gene>
    <name evidence="1" type="primary">grpE</name>
    <name type="ordered locus">Avi_0399</name>
</gene>
<reference key="1">
    <citation type="journal article" date="2009" name="J. Bacteriol.">
        <title>Genome sequences of three Agrobacterium biovars help elucidate the evolution of multichromosome genomes in bacteria.</title>
        <authorList>
            <person name="Slater S.C."/>
            <person name="Goldman B.S."/>
            <person name="Goodner B."/>
            <person name="Setubal J.C."/>
            <person name="Farrand S.K."/>
            <person name="Nester E.W."/>
            <person name="Burr T.J."/>
            <person name="Banta L."/>
            <person name="Dickerman A.W."/>
            <person name="Paulsen I."/>
            <person name="Otten L."/>
            <person name="Suen G."/>
            <person name="Welch R."/>
            <person name="Almeida N.F."/>
            <person name="Arnold F."/>
            <person name="Burton O.T."/>
            <person name="Du Z."/>
            <person name="Ewing A."/>
            <person name="Godsy E."/>
            <person name="Heisel S."/>
            <person name="Houmiel K.L."/>
            <person name="Jhaveri J."/>
            <person name="Lu J."/>
            <person name="Miller N.M."/>
            <person name="Norton S."/>
            <person name="Chen Q."/>
            <person name="Phoolcharoen W."/>
            <person name="Ohlin V."/>
            <person name="Ondrusek D."/>
            <person name="Pride N."/>
            <person name="Stricklin S.L."/>
            <person name="Sun J."/>
            <person name="Wheeler C."/>
            <person name="Wilson L."/>
            <person name="Zhu H."/>
            <person name="Wood D.W."/>
        </authorList>
    </citation>
    <scope>NUCLEOTIDE SEQUENCE [LARGE SCALE GENOMIC DNA]</scope>
    <source>
        <strain>ATCC BAA-846 / DSM 112012 / S4</strain>
    </source>
</reference>
<keyword id="KW-0143">Chaperone</keyword>
<keyword id="KW-0963">Cytoplasm</keyword>
<keyword id="KW-1185">Reference proteome</keyword>
<keyword id="KW-0346">Stress response</keyword>
<accession>B9JZG5</accession>
<organism>
    <name type="scientific">Allorhizobium ampelinum (strain ATCC BAA-846 / DSM 112012 / S4)</name>
    <name type="common">Agrobacterium vitis (strain S4)</name>
    <dbReference type="NCBI Taxonomy" id="311402"/>
    <lineage>
        <taxon>Bacteria</taxon>
        <taxon>Pseudomonadati</taxon>
        <taxon>Pseudomonadota</taxon>
        <taxon>Alphaproteobacteria</taxon>
        <taxon>Hyphomicrobiales</taxon>
        <taxon>Rhizobiaceae</taxon>
        <taxon>Rhizobium/Agrobacterium group</taxon>
        <taxon>Allorhizobium</taxon>
        <taxon>Allorhizobium ampelinum</taxon>
    </lineage>
</organism>
<feature type="chain" id="PRO_1000164175" description="Protein GrpE">
    <location>
        <begin position="1"/>
        <end position="204"/>
    </location>
</feature>
<feature type="region of interest" description="Disordered" evidence="2">
    <location>
        <begin position="1"/>
        <end position="42"/>
    </location>
</feature>
<feature type="compositionally biased region" description="Polar residues" evidence="2">
    <location>
        <begin position="23"/>
        <end position="41"/>
    </location>
</feature>
<name>GRPE_ALLAM</name>
<comment type="function">
    <text evidence="1">Participates actively in the response to hyperosmotic and heat shock by preventing the aggregation of stress-denatured proteins, in association with DnaK and GrpE. It is the nucleotide exchange factor for DnaK and may function as a thermosensor. Unfolded proteins bind initially to DnaJ; upon interaction with the DnaJ-bound protein, DnaK hydrolyzes its bound ATP, resulting in the formation of a stable complex. GrpE releases ADP from DnaK; ATP binding to DnaK triggers the release of the substrate protein, thus completing the reaction cycle. Several rounds of ATP-dependent interactions between DnaJ, DnaK and GrpE are required for fully efficient folding.</text>
</comment>
<comment type="subunit">
    <text evidence="1">Homodimer.</text>
</comment>
<comment type="subcellular location">
    <subcellularLocation>
        <location evidence="1">Cytoplasm</location>
    </subcellularLocation>
</comment>
<comment type="similarity">
    <text evidence="1">Belongs to the GrpE family.</text>
</comment>
<proteinExistence type="inferred from homology"/>
<dbReference type="EMBL" id="CP000633">
    <property type="protein sequence ID" value="ACM35277.1"/>
    <property type="molecule type" value="Genomic_DNA"/>
</dbReference>
<dbReference type="RefSeq" id="WP_012654807.1">
    <property type="nucleotide sequence ID" value="NC_011989.1"/>
</dbReference>
<dbReference type="SMR" id="B9JZG5"/>
<dbReference type="STRING" id="311402.Avi_0399"/>
<dbReference type="KEGG" id="avi:Avi_0399"/>
<dbReference type="eggNOG" id="COG0576">
    <property type="taxonomic scope" value="Bacteria"/>
</dbReference>
<dbReference type="HOGENOM" id="CLU_057217_0_2_5"/>
<dbReference type="Proteomes" id="UP000001596">
    <property type="component" value="Chromosome 1"/>
</dbReference>
<dbReference type="GO" id="GO:0005737">
    <property type="term" value="C:cytoplasm"/>
    <property type="evidence" value="ECO:0007669"/>
    <property type="project" value="UniProtKB-SubCell"/>
</dbReference>
<dbReference type="GO" id="GO:0000774">
    <property type="term" value="F:adenyl-nucleotide exchange factor activity"/>
    <property type="evidence" value="ECO:0007669"/>
    <property type="project" value="InterPro"/>
</dbReference>
<dbReference type="GO" id="GO:0042803">
    <property type="term" value="F:protein homodimerization activity"/>
    <property type="evidence" value="ECO:0007669"/>
    <property type="project" value="InterPro"/>
</dbReference>
<dbReference type="GO" id="GO:0051087">
    <property type="term" value="F:protein-folding chaperone binding"/>
    <property type="evidence" value="ECO:0007669"/>
    <property type="project" value="InterPro"/>
</dbReference>
<dbReference type="GO" id="GO:0051082">
    <property type="term" value="F:unfolded protein binding"/>
    <property type="evidence" value="ECO:0007669"/>
    <property type="project" value="TreeGrafter"/>
</dbReference>
<dbReference type="GO" id="GO:0006457">
    <property type="term" value="P:protein folding"/>
    <property type="evidence" value="ECO:0007669"/>
    <property type="project" value="InterPro"/>
</dbReference>
<dbReference type="CDD" id="cd00446">
    <property type="entry name" value="GrpE"/>
    <property type="match status" value="1"/>
</dbReference>
<dbReference type="FunFam" id="2.30.22.10:FF:000001">
    <property type="entry name" value="Protein GrpE"/>
    <property type="match status" value="1"/>
</dbReference>
<dbReference type="Gene3D" id="3.90.20.20">
    <property type="match status" value="1"/>
</dbReference>
<dbReference type="Gene3D" id="2.30.22.10">
    <property type="entry name" value="Head domain of nucleotide exchange factor GrpE"/>
    <property type="match status" value="1"/>
</dbReference>
<dbReference type="HAMAP" id="MF_01151">
    <property type="entry name" value="GrpE"/>
    <property type="match status" value="1"/>
</dbReference>
<dbReference type="InterPro" id="IPR000740">
    <property type="entry name" value="GrpE"/>
</dbReference>
<dbReference type="InterPro" id="IPR013805">
    <property type="entry name" value="GrpE_coiled_coil"/>
</dbReference>
<dbReference type="InterPro" id="IPR009012">
    <property type="entry name" value="GrpE_head"/>
</dbReference>
<dbReference type="NCBIfam" id="NF010738">
    <property type="entry name" value="PRK14140.1"/>
    <property type="match status" value="1"/>
</dbReference>
<dbReference type="NCBIfam" id="NF010739">
    <property type="entry name" value="PRK14141.1"/>
    <property type="match status" value="1"/>
</dbReference>
<dbReference type="NCBIfam" id="NF010748">
    <property type="entry name" value="PRK14150.1"/>
    <property type="match status" value="1"/>
</dbReference>
<dbReference type="PANTHER" id="PTHR21237">
    <property type="entry name" value="GRPE PROTEIN"/>
    <property type="match status" value="1"/>
</dbReference>
<dbReference type="PANTHER" id="PTHR21237:SF23">
    <property type="entry name" value="GRPE PROTEIN HOMOLOG, MITOCHONDRIAL"/>
    <property type="match status" value="1"/>
</dbReference>
<dbReference type="Pfam" id="PF01025">
    <property type="entry name" value="GrpE"/>
    <property type="match status" value="1"/>
</dbReference>
<dbReference type="PRINTS" id="PR00773">
    <property type="entry name" value="GRPEPROTEIN"/>
</dbReference>
<dbReference type="SUPFAM" id="SSF58014">
    <property type="entry name" value="Coiled-coil domain of nucleotide exchange factor GrpE"/>
    <property type="match status" value="1"/>
</dbReference>
<dbReference type="SUPFAM" id="SSF51064">
    <property type="entry name" value="Head domain of nucleotide exchange factor GrpE"/>
    <property type="match status" value="1"/>
</dbReference>
<dbReference type="PROSITE" id="PS01071">
    <property type="entry name" value="GRPE"/>
    <property type="match status" value="1"/>
</dbReference>
<protein>
    <recommendedName>
        <fullName evidence="1">Protein GrpE</fullName>
    </recommendedName>
    <alternativeName>
        <fullName evidence="1">HSP-70 cofactor</fullName>
    </alternativeName>
</protein>
<evidence type="ECO:0000255" key="1">
    <source>
        <dbReference type="HAMAP-Rule" id="MF_01151"/>
    </source>
</evidence>
<evidence type="ECO:0000256" key="2">
    <source>
        <dbReference type="SAM" id="MobiDB-lite"/>
    </source>
</evidence>
<sequence>MTDETAKNGPDAAADAQIEPQVQEETNSTAEDAGQDNNPTAALQAENAELRDRFLRLAAEMDNLRRRTERDVKDAKSYAVTAFARDMLAVSDNLRRAIDAVPAEAKEEAQAGLTALIEGVEMTERAMLSTLERHGVRKIEPEGQKFDPNFHQAMFEIPNPQVPNNTVVQVVQPGYTIGDRVLRPAMVGVAKGGPKAETAQAADA</sequence>